<organism>
    <name type="scientific">Lactococcus lactis subsp. cremoris (strain SK11)</name>
    <dbReference type="NCBI Taxonomy" id="272622"/>
    <lineage>
        <taxon>Bacteria</taxon>
        <taxon>Bacillati</taxon>
        <taxon>Bacillota</taxon>
        <taxon>Bacilli</taxon>
        <taxon>Lactobacillales</taxon>
        <taxon>Streptococcaceae</taxon>
        <taxon>Lactococcus</taxon>
        <taxon>Lactococcus cremoris subsp. cremoris</taxon>
    </lineage>
</organism>
<name>RS21_LACLS</name>
<accession>Q032K8</accession>
<dbReference type="EMBL" id="CP000425">
    <property type="protein sequence ID" value="ABJ71864.1"/>
    <property type="molecule type" value="Genomic_DNA"/>
</dbReference>
<dbReference type="RefSeq" id="WP_003129844.1">
    <property type="nucleotide sequence ID" value="NC_008527.1"/>
</dbReference>
<dbReference type="SMR" id="Q032K8"/>
<dbReference type="GeneID" id="89632381"/>
<dbReference type="KEGG" id="llc:LACR_0246"/>
<dbReference type="HOGENOM" id="CLU_159258_3_2_9"/>
<dbReference type="Proteomes" id="UP000000240">
    <property type="component" value="Chromosome"/>
</dbReference>
<dbReference type="GO" id="GO:1990904">
    <property type="term" value="C:ribonucleoprotein complex"/>
    <property type="evidence" value="ECO:0007669"/>
    <property type="project" value="UniProtKB-KW"/>
</dbReference>
<dbReference type="GO" id="GO:0005840">
    <property type="term" value="C:ribosome"/>
    <property type="evidence" value="ECO:0007669"/>
    <property type="project" value="UniProtKB-KW"/>
</dbReference>
<dbReference type="GO" id="GO:0003735">
    <property type="term" value="F:structural constituent of ribosome"/>
    <property type="evidence" value="ECO:0007669"/>
    <property type="project" value="InterPro"/>
</dbReference>
<dbReference type="GO" id="GO:0006412">
    <property type="term" value="P:translation"/>
    <property type="evidence" value="ECO:0007669"/>
    <property type="project" value="UniProtKB-UniRule"/>
</dbReference>
<dbReference type="Gene3D" id="1.20.5.1150">
    <property type="entry name" value="Ribosomal protein S8"/>
    <property type="match status" value="1"/>
</dbReference>
<dbReference type="HAMAP" id="MF_00358">
    <property type="entry name" value="Ribosomal_bS21"/>
    <property type="match status" value="1"/>
</dbReference>
<dbReference type="InterPro" id="IPR001911">
    <property type="entry name" value="Ribosomal_bS21"/>
</dbReference>
<dbReference type="InterPro" id="IPR018278">
    <property type="entry name" value="Ribosomal_bS21_CS"/>
</dbReference>
<dbReference type="InterPro" id="IPR038380">
    <property type="entry name" value="Ribosomal_bS21_sf"/>
</dbReference>
<dbReference type="NCBIfam" id="TIGR00030">
    <property type="entry name" value="S21p"/>
    <property type="match status" value="1"/>
</dbReference>
<dbReference type="PANTHER" id="PTHR21109">
    <property type="entry name" value="MITOCHONDRIAL 28S RIBOSOMAL PROTEIN S21"/>
    <property type="match status" value="1"/>
</dbReference>
<dbReference type="PANTHER" id="PTHR21109:SF22">
    <property type="entry name" value="SMALL RIBOSOMAL SUBUNIT PROTEIN BS21"/>
    <property type="match status" value="1"/>
</dbReference>
<dbReference type="Pfam" id="PF01165">
    <property type="entry name" value="Ribosomal_S21"/>
    <property type="match status" value="1"/>
</dbReference>
<dbReference type="PRINTS" id="PR00976">
    <property type="entry name" value="RIBOSOMALS21"/>
</dbReference>
<dbReference type="PROSITE" id="PS01181">
    <property type="entry name" value="RIBOSOMAL_S21"/>
    <property type="match status" value="1"/>
</dbReference>
<proteinExistence type="inferred from homology"/>
<keyword id="KW-0687">Ribonucleoprotein</keyword>
<keyword id="KW-0689">Ribosomal protein</keyword>
<sequence>MSKTLVRKNESLDDALRRFKRSVTKAGTLQELRKREHYEKPSVKRKRKSEAARKRKKY</sequence>
<comment type="similarity">
    <text evidence="1">Belongs to the bacterial ribosomal protein bS21 family.</text>
</comment>
<reference key="1">
    <citation type="journal article" date="2006" name="Proc. Natl. Acad. Sci. U.S.A.">
        <title>Comparative genomics of the lactic acid bacteria.</title>
        <authorList>
            <person name="Makarova K.S."/>
            <person name="Slesarev A."/>
            <person name="Wolf Y.I."/>
            <person name="Sorokin A."/>
            <person name="Mirkin B."/>
            <person name="Koonin E.V."/>
            <person name="Pavlov A."/>
            <person name="Pavlova N."/>
            <person name="Karamychev V."/>
            <person name="Polouchine N."/>
            <person name="Shakhova V."/>
            <person name="Grigoriev I."/>
            <person name="Lou Y."/>
            <person name="Rohksar D."/>
            <person name="Lucas S."/>
            <person name="Huang K."/>
            <person name="Goodstein D.M."/>
            <person name="Hawkins T."/>
            <person name="Plengvidhya V."/>
            <person name="Welker D."/>
            <person name="Hughes J."/>
            <person name="Goh Y."/>
            <person name="Benson A."/>
            <person name="Baldwin K."/>
            <person name="Lee J.-H."/>
            <person name="Diaz-Muniz I."/>
            <person name="Dosti B."/>
            <person name="Smeianov V."/>
            <person name="Wechter W."/>
            <person name="Barabote R."/>
            <person name="Lorca G."/>
            <person name="Altermann E."/>
            <person name="Barrangou R."/>
            <person name="Ganesan B."/>
            <person name="Xie Y."/>
            <person name="Rawsthorne H."/>
            <person name="Tamir D."/>
            <person name="Parker C."/>
            <person name="Breidt F."/>
            <person name="Broadbent J.R."/>
            <person name="Hutkins R."/>
            <person name="O'Sullivan D."/>
            <person name="Steele J."/>
            <person name="Unlu G."/>
            <person name="Saier M.H. Jr."/>
            <person name="Klaenhammer T."/>
            <person name="Richardson P."/>
            <person name="Kozyavkin S."/>
            <person name="Weimer B.C."/>
            <person name="Mills D.A."/>
        </authorList>
    </citation>
    <scope>NUCLEOTIDE SEQUENCE [LARGE SCALE GENOMIC DNA]</scope>
    <source>
        <strain>SK11</strain>
    </source>
</reference>
<feature type="chain" id="PRO_1000005129" description="Small ribosomal subunit protein bS21">
    <location>
        <begin position="1"/>
        <end position="58"/>
    </location>
</feature>
<feature type="region of interest" description="Disordered" evidence="2">
    <location>
        <begin position="27"/>
        <end position="58"/>
    </location>
</feature>
<feature type="compositionally biased region" description="Basic and acidic residues" evidence="2">
    <location>
        <begin position="31"/>
        <end position="42"/>
    </location>
</feature>
<feature type="compositionally biased region" description="Basic residues" evidence="2">
    <location>
        <begin position="43"/>
        <end position="58"/>
    </location>
</feature>
<gene>
    <name evidence="1" type="primary">rpsU</name>
    <name type="ordered locus">LACR_0246</name>
</gene>
<evidence type="ECO:0000255" key="1">
    <source>
        <dbReference type="HAMAP-Rule" id="MF_00358"/>
    </source>
</evidence>
<evidence type="ECO:0000256" key="2">
    <source>
        <dbReference type="SAM" id="MobiDB-lite"/>
    </source>
</evidence>
<evidence type="ECO:0000305" key="3"/>
<protein>
    <recommendedName>
        <fullName evidence="1">Small ribosomal subunit protein bS21</fullName>
    </recommendedName>
    <alternativeName>
        <fullName evidence="3">30S ribosomal protein S21</fullName>
    </alternativeName>
</protein>